<organism>
    <name type="scientific">Shouchella clausii (strain KSM-K16)</name>
    <name type="common">Alkalihalobacillus clausii</name>
    <dbReference type="NCBI Taxonomy" id="66692"/>
    <lineage>
        <taxon>Bacteria</taxon>
        <taxon>Bacillati</taxon>
        <taxon>Bacillota</taxon>
        <taxon>Bacilli</taxon>
        <taxon>Bacillales</taxon>
        <taxon>Bacillaceae</taxon>
        <taxon>Shouchella</taxon>
    </lineage>
</organism>
<proteinExistence type="inferred from homology"/>
<keyword id="KW-0520">NAD</keyword>
<keyword id="KW-0560">Oxidoreductase</keyword>
<keyword id="KW-1185">Reference proteome</keyword>
<protein>
    <recommendedName>
        <fullName evidence="1">Malonate-semialdehyde dehydrogenase 2</fullName>
        <shortName evidence="1">MSA dehydrogenase 2</shortName>
        <ecNumber evidence="1">1.2.1.27</ecNumber>
    </recommendedName>
    <alternativeName>
        <fullName evidence="1">Methylmalonate-semialdehyde dehydrogenase 2</fullName>
        <shortName evidence="1">MMSA dehydrogenase 2</shortName>
        <shortName evidence="1">MSDH 2</shortName>
    </alternativeName>
</protein>
<reference key="1">
    <citation type="submission" date="2003-10" db="EMBL/GenBank/DDBJ databases">
        <title>The complete genome sequence of the alkaliphilic Bacillus clausii KSM-K16.</title>
        <authorList>
            <person name="Takaki Y."/>
            <person name="Kageyama Y."/>
            <person name="Shimamura S."/>
            <person name="Suzuki H."/>
            <person name="Nishi S."/>
            <person name="Hatada Y."/>
            <person name="Kawai S."/>
            <person name="Ito S."/>
            <person name="Horikoshi K."/>
        </authorList>
    </citation>
    <scope>NUCLEOTIDE SEQUENCE [LARGE SCALE GENOMIC DNA]</scope>
    <source>
        <strain>KSM-K16</strain>
    </source>
</reference>
<dbReference type="EC" id="1.2.1.27" evidence="1"/>
<dbReference type="EMBL" id="AP006627">
    <property type="protein sequence ID" value="BAD64344.1"/>
    <property type="molecule type" value="Genomic_DNA"/>
</dbReference>
<dbReference type="RefSeq" id="WP_011246652.1">
    <property type="nucleotide sequence ID" value="NC_006582.1"/>
</dbReference>
<dbReference type="SMR" id="Q5WH11"/>
<dbReference type="STRING" id="66692.ABC1809"/>
<dbReference type="KEGG" id="bcl:ABC1809"/>
<dbReference type="eggNOG" id="COG1012">
    <property type="taxonomic scope" value="Bacteria"/>
</dbReference>
<dbReference type="HOGENOM" id="CLU_005391_1_10_9"/>
<dbReference type="OrthoDB" id="9762913at2"/>
<dbReference type="UniPathway" id="UPA00076">
    <property type="reaction ID" value="UER00148"/>
</dbReference>
<dbReference type="Proteomes" id="UP000001168">
    <property type="component" value="Chromosome"/>
</dbReference>
<dbReference type="GO" id="GO:0018478">
    <property type="term" value="F:malonate-semialdehyde dehydrogenase (acetylating) activity"/>
    <property type="evidence" value="ECO:0007669"/>
    <property type="project" value="UniProtKB-UniRule"/>
</dbReference>
<dbReference type="GO" id="GO:0004491">
    <property type="term" value="F:methylmalonate-semialdehyde dehydrogenase (acylating, NAD) activity"/>
    <property type="evidence" value="ECO:0007669"/>
    <property type="project" value="UniProtKB-UniRule"/>
</dbReference>
<dbReference type="GO" id="GO:0019310">
    <property type="term" value="P:inositol catabolic process"/>
    <property type="evidence" value="ECO:0007669"/>
    <property type="project" value="UniProtKB-UniRule"/>
</dbReference>
<dbReference type="GO" id="GO:0006210">
    <property type="term" value="P:thymine catabolic process"/>
    <property type="evidence" value="ECO:0007669"/>
    <property type="project" value="TreeGrafter"/>
</dbReference>
<dbReference type="GO" id="GO:0006574">
    <property type="term" value="P:valine catabolic process"/>
    <property type="evidence" value="ECO:0007669"/>
    <property type="project" value="TreeGrafter"/>
</dbReference>
<dbReference type="CDD" id="cd07085">
    <property type="entry name" value="ALDH_F6_MMSDH"/>
    <property type="match status" value="1"/>
</dbReference>
<dbReference type="FunFam" id="3.40.309.10:FF:000002">
    <property type="entry name" value="Methylmalonate-semialdehyde dehydrogenase (Acylating)"/>
    <property type="match status" value="1"/>
</dbReference>
<dbReference type="FunFam" id="3.40.605.10:FF:000003">
    <property type="entry name" value="Methylmalonate-semialdehyde dehydrogenase [acylating]"/>
    <property type="match status" value="1"/>
</dbReference>
<dbReference type="Gene3D" id="3.40.605.10">
    <property type="entry name" value="Aldehyde Dehydrogenase, Chain A, domain 1"/>
    <property type="match status" value="1"/>
</dbReference>
<dbReference type="Gene3D" id="3.40.309.10">
    <property type="entry name" value="Aldehyde Dehydrogenase, Chain A, domain 2"/>
    <property type="match status" value="1"/>
</dbReference>
<dbReference type="HAMAP" id="MF_01670">
    <property type="entry name" value="IolA"/>
    <property type="match status" value="1"/>
</dbReference>
<dbReference type="InterPro" id="IPR016161">
    <property type="entry name" value="Ald_DH/histidinol_DH"/>
</dbReference>
<dbReference type="InterPro" id="IPR016163">
    <property type="entry name" value="Ald_DH_C"/>
</dbReference>
<dbReference type="InterPro" id="IPR016160">
    <property type="entry name" value="Ald_DH_CS_CYS"/>
</dbReference>
<dbReference type="InterPro" id="IPR016162">
    <property type="entry name" value="Ald_DH_N"/>
</dbReference>
<dbReference type="InterPro" id="IPR015590">
    <property type="entry name" value="Aldehyde_DH_dom"/>
</dbReference>
<dbReference type="InterPro" id="IPR010061">
    <property type="entry name" value="MeMal-semiAld_DH"/>
</dbReference>
<dbReference type="InterPro" id="IPR023510">
    <property type="entry name" value="MSDH_GmP_bac"/>
</dbReference>
<dbReference type="NCBIfam" id="TIGR01722">
    <property type="entry name" value="MMSDH"/>
    <property type="match status" value="1"/>
</dbReference>
<dbReference type="PANTHER" id="PTHR43866">
    <property type="entry name" value="MALONATE-SEMIALDEHYDE DEHYDROGENASE"/>
    <property type="match status" value="1"/>
</dbReference>
<dbReference type="PANTHER" id="PTHR43866:SF4">
    <property type="entry name" value="MALONATE-SEMIALDEHYDE DEHYDROGENASE"/>
    <property type="match status" value="1"/>
</dbReference>
<dbReference type="Pfam" id="PF00171">
    <property type="entry name" value="Aldedh"/>
    <property type="match status" value="1"/>
</dbReference>
<dbReference type="SUPFAM" id="SSF53720">
    <property type="entry name" value="ALDH-like"/>
    <property type="match status" value="1"/>
</dbReference>
<dbReference type="PROSITE" id="PS00070">
    <property type="entry name" value="ALDEHYDE_DEHYDR_CYS"/>
    <property type="match status" value="1"/>
</dbReference>
<gene>
    <name evidence="1" type="primary">iolA2</name>
    <name type="ordered locus">ABC1809</name>
</gene>
<comment type="function">
    <text evidence="1">Catalyzes the oxidation of malonate semialdehyde (MSA) and methylmalonate semialdehyde (MMSA) into acetyl-CoA and propanoyl-CoA, respectively. Is involved in a myo-inositol catabolic pathway. Bicarbonate, and not CO2, is the end-product of the enzymatic reaction.</text>
</comment>
<comment type="catalytic activity">
    <reaction evidence="1">
        <text>3-oxopropanoate + NAD(+) + CoA + H2O = hydrogencarbonate + acetyl-CoA + NADH + H(+)</text>
        <dbReference type="Rhea" id="RHEA:76615"/>
        <dbReference type="ChEBI" id="CHEBI:15377"/>
        <dbReference type="ChEBI" id="CHEBI:15378"/>
        <dbReference type="ChEBI" id="CHEBI:17544"/>
        <dbReference type="ChEBI" id="CHEBI:33190"/>
        <dbReference type="ChEBI" id="CHEBI:57287"/>
        <dbReference type="ChEBI" id="CHEBI:57288"/>
        <dbReference type="ChEBI" id="CHEBI:57540"/>
        <dbReference type="ChEBI" id="CHEBI:57945"/>
        <dbReference type="EC" id="1.2.1.27"/>
    </reaction>
    <physiologicalReaction direction="left-to-right" evidence="1">
        <dbReference type="Rhea" id="RHEA:76616"/>
    </physiologicalReaction>
</comment>
<comment type="catalytic activity">
    <reaction evidence="1">
        <text>2-methyl-3-oxopropanoate + NAD(+) + CoA + H2O = propanoyl-CoA + hydrogencarbonate + NADH + H(+)</text>
        <dbReference type="Rhea" id="RHEA:20804"/>
        <dbReference type="ChEBI" id="CHEBI:15377"/>
        <dbReference type="ChEBI" id="CHEBI:15378"/>
        <dbReference type="ChEBI" id="CHEBI:17544"/>
        <dbReference type="ChEBI" id="CHEBI:57287"/>
        <dbReference type="ChEBI" id="CHEBI:57392"/>
        <dbReference type="ChEBI" id="CHEBI:57540"/>
        <dbReference type="ChEBI" id="CHEBI:57700"/>
        <dbReference type="ChEBI" id="CHEBI:57945"/>
        <dbReference type="EC" id="1.2.1.27"/>
    </reaction>
    <physiologicalReaction direction="left-to-right" evidence="1">
        <dbReference type="Rhea" id="RHEA:20805"/>
    </physiologicalReaction>
</comment>
<comment type="pathway">
    <text evidence="1">Polyol metabolism; myo-inositol degradation into acetyl-CoA; acetyl-CoA from myo-inositol: step 7/7.</text>
</comment>
<comment type="subunit">
    <text evidence="1">Homotetramer.</text>
</comment>
<comment type="similarity">
    <text evidence="1">Belongs to the aldehyde dehydrogenase family. IolA subfamily.</text>
</comment>
<name>IOLA2_SHOC1</name>
<evidence type="ECO:0000255" key="1">
    <source>
        <dbReference type="HAMAP-Rule" id="MF_01670"/>
    </source>
</evidence>
<accession>Q5WH11</accession>
<feature type="chain" id="PRO_0000352327" description="Malonate-semialdehyde dehydrogenase 2">
    <location>
        <begin position="1"/>
        <end position="486"/>
    </location>
</feature>
<feature type="active site" description="Nucleophile" evidence="1">
    <location>
        <position position="286"/>
    </location>
</feature>
<feature type="binding site" evidence="1">
    <location>
        <position position="154"/>
    </location>
    <ligand>
        <name>NAD(+)</name>
        <dbReference type="ChEBI" id="CHEBI:57540"/>
    </ligand>
</feature>
<feature type="binding site" evidence="1">
    <location>
        <position position="178"/>
    </location>
    <ligand>
        <name>NAD(+)</name>
        <dbReference type="ChEBI" id="CHEBI:57540"/>
    </ligand>
</feature>
<feature type="binding site" evidence="1">
    <location>
        <position position="181"/>
    </location>
    <ligand>
        <name>NAD(+)</name>
        <dbReference type="ChEBI" id="CHEBI:57540"/>
    </ligand>
</feature>
<feature type="binding site" evidence="1">
    <location>
        <position position="182"/>
    </location>
    <ligand>
        <name>NAD(+)</name>
        <dbReference type="ChEBI" id="CHEBI:57540"/>
    </ligand>
</feature>
<feature type="binding site" evidence="1">
    <location>
        <position position="231"/>
    </location>
    <ligand>
        <name>NAD(+)</name>
        <dbReference type="ChEBI" id="CHEBI:57540"/>
    </ligand>
</feature>
<feature type="binding site" evidence="1">
    <location>
        <position position="385"/>
    </location>
    <ligand>
        <name>NAD(+)</name>
        <dbReference type="ChEBI" id="CHEBI:57540"/>
    </ligand>
</feature>
<sequence length="486" mass="52752">MTTTKVKTVKNWIDGAWVEASTADTEVVPNPATGEAIAYVPLSGERDVEQAVASAKRAYETWKTVPVPERTRYMFAYLEQLKKNREQLAQLITLENGKTIKDARGEVQRGIECVELATSTPTMMMGDALPDIASGIDGSIWRYPLGVVAGITPFNFPMMVPLWMFPLAIAAGNTFVLKTSERTPLLAEQLVSLMHEVGLPRGVLNLVNGGKAVVNGLLNHPDVEAISFVGSEPVARYVYETGTANGKRVQALAGAKNHAVVLADCELDKTVQGVIGAAFASSGERCMACSVVAVVEEVADAFIEKLTAETKKLTVGNGKNDEHFVGPLIRQSHKDKVVKYIEQGVEQGAELLVDGRNATSEEAGYYLGATLFDHVTPEMTIWQEELFAPVLSIVRVRDLEEAIALTNRSRFANGAVIYTSSGKAAQHFRNAIDAGMVGINVNVPAPMAFFSFAGNKASFFGDLGTNGRDGIQFYTRKKVVTERWFN</sequence>